<proteinExistence type="inferred from homology"/>
<sequence length="198" mass="20687">MGPEAFLPVALIIGYLFGSIPFGLILTKLAGTQDLRSIGSGNIGATNVLRTGRKGLAAGTLLGDALKGTAAVIISGYLGGPNAAMIAGLGAFLGHLFPVWLKFRGGKGVAVYIGILIGLFWPGAIFFCLVWLATAFAFRYSSVAALVASVLTPIVLWAFGHTALAALFALLTLLLIYMHRENIRRLQAGTEGKIGAKK</sequence>
<comment type="function">
    <text evidence="1">Catalyzes the transfer of an acyl group from acyl-phosphate (acyl-PO(4)) to glycerol-3-phosphate (G3P) to form lysophosphatidic acid (LPA). This enzyme utilizes acyl-phosphate as fatty acyl donor, but not acyl-CoA or acyl-ACP.</text>
</comment>
<comment type="catalytic activity">
    <reaction evidence="1">
        <text>an acyl phosphate + sn-glycerol 3-phosphate = a 1-acyl-sn-glycero-3-phosphate + phosphate</text>
        <dbReference type="Rhea" id="RHEA:34075"/>
        <dbReference type="ChEBI" id="CHEBI:43474"/>
        <dbReference type="ChEBI" id="CHEBI:57597"/>
        <dbReference type="ChEBI" id="CHEBI:57970"/>
        <dbReference type="ChEBI" id="CHEBI:59918"/>
        <dbReference type="EC" id="2.3.1.275"/>
    </reaction>
</comment>
<comment type="pathway">
    <text evidence="1">Lipid metabolism; phospholipid metabolism.</text>
</comment>
<comment type="subunit">
    <text evidence="1">Probably interacts with PlsX.</text>
</comment>
<comment type="subcellular location">
    <subcellularLocation>
        <location evidence="1">Cell inner membrane</location>
        <topology evidence="1">Multi-pass membrane protein</topology>
    </subcellularLocation>
</comment>
<comment type="similarity">
    <text evidence="1">Belongs to the PlsY family.</text>
</comment>
<organism>
    <name type="scientific">Bradyrhizobium sp. (strain BTAi1 / ATCC BAA-1182)</name>
    <dbReference type="NCBI Taxonomy" id="288000"/>
    <lineage>
        <taxon>Bacteria</taxon>
        <taxon>Pseudomonadati</taxon>
        <taxon>Pseudomonadota</taxon>
        <taxon>Alphaproteobacteria</taxon>
        <taxon>Hyphomicrobiales</taxon>
        <taxon>Nitrobacteraceae</taxon>
        <taxon>Bradyrhizobium</taxon>
    </lineage>
</organism>
<accession>A5EKR0</accession>
<gene>
    <name evidence="1" type="primary">plsY</name>
    <name type="ordered locus">BBta_4727</name>
</gene>
<evidence type="ECO:0000255" key="1">
    <source>
        <dbReference type="HAMAP-Rule" id="MF_01043"/>
    </source>
</evidence>
<keyword id="KW-0997">Cell inner membrane</keyword>
<keyword id="KW-1003">Cell membrane</keyword>
<keyword id="KW-0444">Lipid biosynthesis</keyword>
<keyword id="KW-0443">Lipid metabolism</keyword>
<keyword id="KW-0472">Membrane</keyword>
<keyword id="KW-0594">Phospholipid biosynthesis</keyword>
<keyword id="KW-1208">Phospholipid metabolism</keyword>
<keyword id="KW-1185">Reference proteome</keyword>
<keyword id="KW-0808">Transferase</keyword>
<keyword id="KW-0812">Transmembrane</keyword>
<keyword id="KW-1133">Transmembrane helix</keyword>
<dbReference type="EC" id="2.3.1.275" evidence="1"/>
<dbReference type="EMBL" id="CP000494">
    <property type="protein sequence ID" value="ABQ36754.1"/>
    <property type="molecule type" value="Genomic_DNA"/>
</dbReference>
<dbReference type="RefSeq" id="WP_012044740.1">
    <property type="nucleotide sequence ID" value="NC_009485.1"/>
</dbReference>
<dbReference type="SMR" id="A5EKR0"/>
<dbReference type="STRING" id="288000.BBta_4727"/>
<dbReference type="KEGG" id="bbt:BBta_4727"/>
<dbReference type="eggNOG" id="COG0344">
    <property type="taxonomic scope" value="Bacteria"/>
</dbReference>
<dbReference type="HOGENOM" id="CLU_081254_1_0_5"/>
<dbReference type="OrthoDB" id="9777124at2"/>
<dbReference type="UniPathway" id="UPA00085"/>
<dbReference type="Proteomes" id="UP000000246">
    <property type="component" value="Chromosome"/>
</dbReference>
<dbReference type="GO" id="GO:0005886">
    <property type="term" value="C:plasma membrane"/>
    <property type="evidence" value="ECO:0007669"/>
    <property type="project" value="UniProtKB-SubCell"/>
</dbReference>
<dbReference type="GO" id="GO:0043772">
    <property type="term" value="F:acyl-phosphate glycerol-3-phosphate acyltransferase activity"/>
    <property type="evidence" value="ECO:0007669"/>
    <property type="project" value="UniProtKB-UniRule"/>
</dbReference>
<dbReference type="GO" id="GO:0008654">
    <property type="term" value="P:phospholipid biosynthetic process"/>
    <property type="evidence" value="ECO:0007669"/>
    <property type="project" value="UniProtKB-UniRule"/>
</dbReference>
<dbReference type="HAMAP" id="MF_01043">
    <property type="entry name" value="PlsY"/>
    <property type="match status" value="1"/>
</dbReference>
<dbReference type="InterPro" id="IPR003811">
    <property type="entry name" value="G3P_acylTferase_PlsY"/>
</dbReference>
<dbReference type="NCBIfam" id="TIGR00023">
    <property type="entry name" value="glycerol-3-phosphate 1-O-acyltransferase PlsY"/>
    <property type="match status" value="1"/>
</dbReference>
<dbReference type="PANTHER" id="PTHR30309:SF0">
    <property type="entry name" value="GLYCEROL-3-PHOSPHATE ACYLTRANSFERASE-RELATED"/>
    <property type="match status" value="1"/>
</dbReference>
<dbReference type="PANTHER" id="PTHR30309">
    <property type="entry name" value="INNER MEMBRANE PROTEIN YGIH"/>
    <property type="match status" value="1"/>
</dbReference>
<dbReference type="Pfam" id="PF02660">
    <property type="entry name" value="G3P_acyltransf"/>
    <property type="match status" value="1"/>
</dbReference>
<dbReference type="SMART" id="SM01207">
    <property type="entry name" value="G3P_acyltransf"/>
    <property type="match status" value="1"/>
</dbReference>
<reference key="1">
    <citation type="journal article" date="2007" name="Science">
        <title>Legumes symbioses: absence of nod genes in photosynthetic bradyrhizobia.</title>
        <authorList>
            <person name="Giraud E."/>
            <person name="Moulin L."/>
            <person name="Vallenet D."/>
            <person name="Barbe V."/>
            <person name="Cytryn E."/>
            <person name="Avarre J.-C."/>
            <person name="Jaubert M."/>
            <person name="Simon D."/>
            <person name="Cartieaux F."/>
            <person name="Prin Y."/>
            <person name="Bena G."/>
            <person name="Hannibal L."/>
            <person name="Fardoux J."/>
            <person name="Kojadinovic M."/>
            <person name="Vuillet L."/>
            <person name="Lajus A."/>
            <person name="Cruveiller S."/>
            <person name="Rouy Z."/>
            <person name="Mangenot S."/>
            <person name="Segurens B."/>
            <person name="Dossat C."/>
            <person name="Franck W.L."/>
            <person name="Chang W.-S."/>
            <person name="Saunders E."/>
            <person name="Bruce D."/>
            <person name="Richardson P."/>
            <person name="Normand P."/>
            <person name="Dreyfus B."/>
            <person name="Pignol D."/>
            <person name="Stacey G."/>
            <person name="Emerich D."/>
            <person name="Vermeglio A."/>
            <person name="Medigue C."/>
            <person name="Sadowsky M."/>
        </authorList>
    </citation>
    <scope>NUCLEOTIDE SEQUENCE [LARGE SCALE GENOMIC DNA]</scope>
    <source>
        <strain>BTAi1 / ATCC BAA-1182</strain>
    </source>
</reference>
<name>PLSY_BRASB</name>
<protein>
    <recommendedName>
        <fullName evidence="1">Glycerol-3-phosphate acyltransferase</fullName>
    </recommendedName>
    <alternativeName>
        <fullName evidence="1">Acyl-PO4 G3P acyltransferase</fullName>
    </alternativeName>
    <alternativeName>
        <fullName evidence="1">Acyl-phosphate--glycerol-3-phosphate acyltransferase</fullName>
    </alternativeName>
    <alternativeName>
        <fullName evidence="1">G3P acyltransferase</fullName>
        <shortName evidence="1">GPAT</shortName>
        <ecNumber evidence="1">2.3.1.275</ecNumber>
    </alternativeName>
    <alternativeName>
        <fullName evidence="1">Lysophosphatidic acid synthase</fullName>
        <shortName evidence="1">LPA synthase</shortName>
    </alternativeName>
</protein>
<feature type="chain" id="PRO_1000084378" description="Glycerol-3-phosphate acyltransferase">
    <location>
        <begin position="1"/>
        <end position="198"/>
    </location>
</feature>
<feature type="transmembrane region" description="Helical" evidence="1">
    <location>
        <begin position="6"/>
        <end position="26"/>
    </location>
</feature>
<feature type="transmembrane region" description="Helical" evidence="1">
    <location>
        <begin position="55"/>
        <end position="75"/>
    </location>
</feature>
<feature type="transmembrane region" description="Helical" evidence="1">
    <location>
        <begin position="83"/>
        <end position="103"/>
    </location>
</feature>
<feature type="transmembrane region" description="Helical" evidence="1">
    <location>
        <begin position="113"/>
        <end position="133"/>
    </location>
</feature>
<feature type="transmembrane region" description="Helical" evidence="1">
    <location>
        <begin position="154"/>
        <end position="174"/>
    </location>
</feature>